<sequence>EYDDMYTEKRPKVYAFGL</sequence>
<organism>
    <name type="scientific">Carcinus maenas</name>
    <name type="common">Common shore crab</name>
    <name type="synonym">Green crab</name>
    <dbReference type="NCBI Taxonomy" id="6759"/>
    <lineage>
        <taxon>Eukaryota</taxon>
        <taxon>Metazoa</taxon>
        <taxon>Ecdysozoa</taxon>
        <taxon>Arthropoda</taxon>
        <taxon>Crustacea</taxon>
        <taxon>Multicrustacea</taxon>
        <taxon>Malacostraca</taxon>
        <taxon>Eumalacostraca</taxon>
        <taxon>Eucarida</taxon>
        <taxon>Decapoda</taxon>
        <taxon>Pleocyemata</taxon>
        <taxon>Brachyura</taxon>
        <taxon>Eubrachyura</taxon>
        <taxon>Portunoidea</taxon>
        <taxon>Carcinidae</taxon>
        <taxon>Carcinus</taxon>
    </lineage>
</organism>
<reference key="1">
    <citation type="journal article" date="1997" name="Eur. J. Biochem.">
        <title>Isolation and identification of multiple neuropeptides of the allatostatin superfamily in the shore crab Carcinus maenas.</title>
        <authorList>
            <person name="Duve H."/>
            <person name="Johnsen A.H."/>
            <person name="Maestro J.-L."/>
            <person name="Scott A.G."/>
            <person name="Jaros P.P."/>
            <person name="Thorpe A."/>
        </authorList>
    </citation>
    <scope>PROTEIN SEQUENCE</scope>
    <scope>AMIDATION AT LEU-18</scope>
    <source>
        <tissue>Cerebral ganglion</tissue>
        <tissue>Thoracic ganglion</tissue>
    </source>
</reference>
<protein>
    <recommendedName>
        <fullName>Carcinustatin-13</fullName>
    </recommendedName>
</protein>
<proteinExistence type="evidence at protein level"/>
<feature type="peptide" id="PRO_0000043468" description="Carcinustatin-13">
    <location>
        <begin position="1"/>
        <end position="18"/>
    </location>
</feature>
<feature type="modified residue" description="Leucine amide" evidence="1">
    <location>
        <position position="18"/>
    </location>
</feature>
<keyword id="KW-0027">Amidation</keyword>
<keyword id="KW-0903">Direct protein sequencing</keyword>
<keyword id="KW-0527">Neuropeptide</keyword>
<keyword id="KW-0964">Secreted</keyword>
<comment type="function">
    <text>May act as a neurotransmitter or neuromodulator.</text>
</comment>
<comment type="subcellular location">
    <subcellularLocation>
        <location>Secreted</location>
    </subcellularLocation>
</comment>
<comment type="similarity">
    <text evidence="2">Belongs to the allatostatin family.</text>
</comment>
<dbReference type="GO" id="GO:0005576">
    <property type="term" value="C:extracellular region"/>
    <property type="evidence" value="ECO:0007669"/>
    <property type="project" value="UniProtKB-SubCell"/>
</dbReference>
<dbReference type="GO" id="GO:0007218">
    <property type="term" value="P:neuropeptide signaling pathway"/>
    <property type="evidence" value="ECO:0007669"/>
    <property type="project" value="UniProtKB-KW"/>
</dbReference>
<name>ALL13_CARMA</name>
<accession>P81816</accession>
<evidence type="ECO:0000269" key="1">
    <source>
    </source>
</evidence>
<evidence type="ECO:0000305" key="2"/>